<sequence length="238" mass="25830">MGRKWANIVAKKTAKDGANSKVYAKFGVEIYVAAKKGDPDPESNSALKFVIDRAKQAQVPKHIIDKAIDKAKGNTDETFTEGRYEGFGPNGSMLIVDTLTSNVNRTAANVRAAFGKNGGNMGASGSVSYLFDNKGVIVFGGEDADAVFEQLLEADVDVDDVEAQEGTITVYTAPTDLHKAIVALRESGIEEFQVTELEMIPQSEVELSGEDLETFEKLYSVLEDDEDVQKIYTNVDGF</sequence>
<reference key="1">
    <citation type="journal article" date="2010" name="Genome Biol.">
        <title>Structure and dynamics of the pan-genome of Streptococcus pneumoniae and closely related species.</title>
        <authorList>
            <person name="Donati C."/>
            <person name="Hiller N.L."/>
            <person name="Tettelin H."/>
            <person name="Muzzi A."/>
            <person name="Croucher N.J."/>
            <person name="Angiuoli S.V."/>
            <person name="Oggioni M."/>
            <person name="Dunning Hotopp J.C."/>
            <person name="Hu F.Z."/>
            <person name="Riley D.R."/>
            <person name="Covacci A."/>
            <person name="Mitchell T.J."/>
            <person name="Bentley S.D."/>
            <person name="Kilian M."/>
            <person name="Ehrlich G.D."/>
            <person name="Rappuoli R."/>
            <person name="Moxon E.R."/>
            <person name="Masignani V."/>
        </authorList>
    </citation>
    <scope>NUCLEOTIDE SEQUENCE [LARGE SCALE GENOMIC DNA]</scope>
    <source>
        <strain>Taiwan19F-14</strain>
    </source>
</reference>
<organism>
    <name type="scientific">Streptococcus pneumoniae (strain Taiwan19F-14)</name>
    <dbReference type="NCBI Taxonomy" id="487213"/>
    <lineage>
        <taxon>Bacteria</taxon>
        <taxon>Bacillati</taxon>
        <taxon>Bacillota</taxon>
        <taxon>Bacilli</taxon>
        <taxon>Lactobacillales</taxon>
        <taxon>Streptococcaceae</taxon>
        <taxon>Streptococcus</taxon>
    </lineage>
</organism>
<evidence type="ECO:0000255" key="1">
    <source>
        <dbReference type="HAMAP-Rule" id="MF_00918"/>
    </source>
</evidence>
<name>Y1871_STRZT</name>
<feature type="chain" id="PRO_1000200115" description="Probable transcriptional regulatory protein SPT_1871">
    <location>
        <begin position="1"/>
        <end position="238"/>
    </location>
</feature>
<proteinExistence type="inferred from homology"/>
<keyword id="KW-0963">Cytoplasm</keyword>
<keyword id="KW-0238">DNA-binding</keyword>
<keyword id="KW-0804">Transcription</keyword>
<keyword id="KW-0805">Transcription regulation</keyword>
<dbReference type="EMBL" id="CP000921">
    <property type="protein sequence ID" value="ACO22599.1"/>
    <property type="molecule type" value="Genomic_DNA"/>
</dbReference>
<dbReference type="RefSeq" id="WP_000532876.1">
    <property type="nucleotide sequence ID" value="NC_012469.1"/>
</dbReference>
<dbReference type="SMR" id="C1CTF2"/>
<dbReference type="KEGG" id="snt:SPT_1871"/>
<dbReference type="HOGENOM" id="CLU_062974_2_0_9"/>
<dbReference type="GO" id="GO:0005829">
    <property type="term" value="C:cytosol"/>
    <property type="evidence" value="ECO:0007669"/>
    <property type="project" value="TreeGrafter"/>
</dbReference>
<dbReference type="GO" id="GO:0003677">
    <property type="term" value="F:DNA binding"/>
    <property type="evidence" value="ECO:0007669"/>
    <property type="project" value="UniProtKB-UniRule"/>
</dbReference>
<dbReference type="GO" id="GO:0006355">
    <property type="term" value="P:regulation of DNA-templated transcription"/>
    <property type="evidence" value="ECO:0007669"/>
    <property type="project" value="UniProtKB-UniRule"/>
</dbReference>
<dbReference type="FunFam" id="1.10.10.200:FF:000003">
    <property type="entry name" value="Probable transcriptional regulatory protein YeeN"/>
    <property type="match status" value="1"/>
</dbReference>
<dbReference type="FunFam" id="3.30.70.980:FF:000004">
    <property type="entry name" value="Probable transcriptional regulatory protein YeeN"/>
    <property type="match status" value="1"/>
</dbReference>
<dbReference type="Gene3D" id="1.10.10.200">
    <property type="match status" value="1"/>
</dbReference>
<dbReference type="Gene3D" id="3.30.70.980">
    <property type="match status" value="2"/>
</dbReference>
<dbReference type="HAMAP" id="MF_00693">
    <property type="entry name" value="Transcrip_reg_TACO1"/>
    <property type="match status" value="1"/>
</dbReference>
<dbReference type="HAMAP" id="MF_00918">
    <property type="entry name" value="Transcrip_reg_TACO1_YeeN"/>
    <property type="match status" value="1"/>
</dbReference>
<dbReference type="InterPro" id="IPR017856">
    <property type="entry name" value="Integrase-like_N"/>
</dbReference>
<dbReference type="InterPro" id="IPR048300">
    <property type="entry name" value="TACO1_YebC-like_2nd/3rd_dom"/>
</dbReference>
<dbReference type="InterPro" id="IPR049083">
    <property type="entry name" value="TACO1_YebC_N"/>
</dbReference>
<dbReference type="InterPro" id="IPR002876">
    <property type="entry name" value="Transcrip_reg_TACO1-like"/>
</dbReference>
<dbReference type="InterPro" id="IPR026564">
    <property type="entry name" value="Transcrip_reg_TACO1-like_dom3"/>
</dbReference>
<dbReference type="InterPro" id="IPR026562">
    <property type="entry name" value="Transcrip_reg_TACO1_YeeN"/>
</dbReference>
<dbReference type="InterPro" id="IPR029072">
    <property type="entry name" value="YebC-like"/>
</dbReference>
<dbReference type="NCBIfam" id="NF001030">
    <property type="entry name" value="PRK00110.1"/>
    <property type="match status" value="1"/>
</dbReference>
<dbReference type="NCBIfam" id="NF009044">
    <property type="entry name" value="PRK12378.1"/>
    <property type="match status" value="1"/>
</dbReference>
<dbReference type="NCBIfam" id="TIGR01033">
    <property type="entry name" value="YebC/PmpR family DNA-binding transcriptional regulator"/>
    <property type="match status" value="1"/>
</dbReference>
<dbReference type="PANTHER" id="PTHR12532">
    <property type="entry name" value="TRANSLATIONAL ACTIVATOR OF CYTOCHROME C OXIDASE 1"/>
    <property type="match status" value="1"/>
</dbReference>
<dbReference type="PANTHER" id="PTHR12532:SF0">
    <property type="entry name" value="TRANSLATIONAL ACTIVATOR OF CYTOCHROME C OXIDASE 1"/>
    <property type="match status" value="1"/>
</dbReference>
<dbReference type="Pfam" id="PF20772">
    <property type="entry name" value="TACO1_YebC_N"/>
    <property type="match status" value="1"/>
</dbReference>
<dbReference type="Pfam" id="PF01709">
    <property type="entry name" value="Transcrip_reg"/>
    <property type="match status" value="1"/>
</dbReference>
<dbReference type="SUPFAM" id="SSF75625">
    <property type="entry name" value="YebC-like"/>
    <property type="match status" value="1"/>
</dbReference>
<gene>
    <name type="ordered locus">SPT_1871</name>
</gene>
<comment type="subcellular location">
    <subcellularLocation>
        <location evidence="1">Cytoplasm</location>
    </subcellularLocation>
</comment>
<comment type="similarity">
    <text evidence="1">Belongs to the TACO1 family. YeeN subfamily.</text>
</comment>
<accession>C1CTF2</accession>
<protein>
    <recommendedName>
        <fullName evidence="1">Probable transcriptional regulatory protein SPT_1871</fullName>
    </recommendedName>
</protein>